<accession>C6C1A3</accession>
<protein>
    <recommendedName>
        <fullName evidence="1">Large ribosomal subunit protein uL30</fullName>
    </recommendedName>
    <alternativeName>
        <fullName evidence="2">50S ribosomal protein L30</fullName>
    </alternativeName>
</protein>
<organism>
    <name type="scientific">Maridesulfovibrio salexigens (strain ATCC 14822 / DSM 2638 / NCIMB 8403 / VKM B-1763)</name>
    <name type="common">Desulfovibrio salexigens</name>
    <dbReference type="NCBI Taxonomy" id="526222"/>
    <lineage>
        <taxon>Bacteria</taxon>
        <taxon>Pseudomonadati</taxon>
        <taxon>Thermodesulfobacteriota</taxon>
        <taxon>Desulfovibrionia</taxon>
        <taxon>Desulfovibrionales</taxon>
        <taxon>Desulfovibrionaceae</taxon>
        <taxon>Maridesulfovibrio</taxon>
    </lineage>
</organism>
<dbReference type="EMBL" id="CP001649">
    <property type="protein sequence ID" value="ACS79266.1"/>
    <property type="molecule type" value="Genomic_DNA"/>
</dbReference>
<dbReference type="RefSeq" id="WP_015851084.1">
    <property type="nucleotide sequence ID" value="NC_012881.1"/>
</dbReference>
<dbReference type="SMR" id="C6C1A3"/>
<dbReference type="STRING" id="526222.Desal_1203"/>
<dbReference type="KEGG" id="dsa:Desal_1203"/>
<dbReference type="eggNOG" id="COG1841">
    <property type="taxonomic scope" value="Bacteria"/>
</dbReference>
<dbReference type="HOGENOM" id="CLU_131047_1_3_7"/>
<dbReference type="OrthoDB" id="9812790at2"/>
<dbReference type="Proteomes" id="UP000002601">
    <property type="component" value="Chromosome"/>
</dbReference>
<dbReference type="GO" id="GO:0022625">
    <property type="term" value="C:cytosolic large ribosomal subunit"/>
    <property type="evidence" value="ECO:0007669"/>
    <property type="project" value="TreeGrafter"/>
</dbReference>
<dbReference type="GO" id="GO:0003735">
    <property type="term" value="F:structural constituent of ribosome"/>
    <property type="evidence" value="ECO:0007669"/>
    <property type="project" value="InterPro"/>
</dbReference>
<dbReference type="GO" id="GO:0006412">
    <property type="term" value="P:translation"/>
    <property type="evidence" value="ECO:0007669"/>
    <property type="project" value="InterPro"/>
</dbReference>
<dbReference type="CDD" id="cd01658">
    <property type="entry name" value="Ribosomal_L30"/>
    <property type="match status" value="1"/>
</dbReference>
<dbReference type="Gene3D" id="3.30.1390.20">
    <property type="entry name" value="Ribosomal protein L30, ferredoxin-like fold domain"/>
    <property type="match status" value="1"/>
</dbReference>
<dbReference type="HAMAP" id="MF_01371_B">
    <property type="entry name" value="Ribosomal_uL30_B"/>
    <property type="match status" value="1"/>
</dbReference>
<dbReference type="InterPro" id="IPR036919">
    <property type="entry name" value="Ribo_uL30_ferredoxin-like_sf"/>
</dbReference>
<dbReference type="InterPro" id="IPR005996">
    <property type="entry name" value="Ribosomal_uL30_bac-type"/>
</dbReference>
<dbReference type="InterPro" id="IPR016082">
    <property type="entry name" value="Ribosomal_uL30_ferredoxin-like"/>
</dbReference>
<dbReference type="NCBIfam" id="TIGR01308">
    <property type="entry name" value="rpmD_bact"/>
    <property type="match status" value="1"/>
</dbReference>
<dbReference type="PANTHER" id="PTHR15892:SF2">
    <property type="entry name" value="LARGE RIBOSOMAL SUBUNIT PROTEIN UL30M"/>
    <property type="match status" value="1"/>
</dbReference>
<dbReference type="PANTHER" id="PTHR15892">
    <property type="entry name" value="MITOCHONDRIAL RIBOSOMAL PROTEIN L30"/>
    <property type="match status" value="1"/>
</dbReference>
<dbReference type="Pfam" id="PF00327">
    <property type="entry name" value="Ribosomal_L30"/>
    <property type="match status" value="1"/>
</dbReference>
<dbReference type="PIRSF" id="PIRSF002211">
    <property type="entry name" value="Ribosomal_L30_bac-type"/>
    <property type="match status" value="1"/>
</dbReference>
<dbReference type="SUPFAM" id="SSF55129">
    <property type="entry name" value="Ribosomal protein L30p/L7e"/>
    <property type="match status" value="1"/>
</dbReference>
<proteinExistence type="inferred from homology"/>
<name>RL30_MARSD</name>
<keyword id="KW-1185">Reference proteome</keyword>
<keyword id="KW-0687">Ribonucleoprotein</keyword>
<keyword id="KW-0689">Ribosomal protein</keyword>
<reference key="1">
    <citation type="submission" date="2009-06" db="EMBL/GenBank/DDBJ databases">
        <title>Complete sequence of Desulfovibrio salexigens DSM 2638.</title>
        <authorList>
            <consortium name="US DOE Joint Genome Institute"/>
            <person name="Lucas S."/>
            <person name="Copeland A."/>
            <person name="Lapidus A."/>
            <person name="Glavina del Rio T."/>
            <person name="Tice H."/>
            <person name="Bruce D."/>
            <person name="Goodwin L."/>
            <person name="Pitluck S."/>
            <person name="Munk A.C."/>
            <person name="Brettin T."/>
            <person name="Detter J.C."/>
            <person name="Han C."/>
            <person name="Tapia R."/>
            <person name="Larimer F."/>
            <person name="Land M."/>
            <person name="Hauser L."/>
            <person name="Kyrpides N."/>
            <person name="Anderson I."/>
            <person name="Wall J.D."/>
            <person name="Arkin A.P."/>
            <person name="Dehal P."/>
            <person name="Chivian D."/>
            <person name="Giles B."/>
            <person name="Hazen T.C."/>
        </authorList>
    </citation>
    <scope>NUCLEOTIDE SEQUENCE [LARGE SCALE GENOMIC DNA]</scope>
    <source>
        <strain>ATCC 14822 / DSM 2638 / NCIMB 8403 / VKM B-1763</strain>
    </source>
</reference>
<comment type="subunit">
    <text evidence="1">Part of the 50S ribosomal subunit.</text>
</comment>
<comment type="similarity">
    <text evidence="1">Belongs to the universal ribosomal protein uL30 family.</text>
</comment>
<sequence>MLKVKLVRSMIGCNPKQRATIKALGLRKIRQEKSFEDTPIVRGMIKKVEHLVEVSES</sequence>
<evidence type="ECO:0000255" key="1">
    <source>
        <dbReference type="HAMAP-Rule" id="MF_01371"/>
    </source>
</evidence>
<evidence type="ECO:0000305" key="2"/>
<gene>
    <name evidence="1" type="primary">rpmD</name>
    <name type="ordered locus">Desal_1203</name>
</gene>
<feature type="chain" id="PRO_1000215055" description="Large ribosomal subunit protein uL30">
    <location>
        <begin position="1"/>
        <end position="57"/>
    </location>
</feature>